<proteinExistence type="evidence at transcript level"/>
<organism>
    <name type="scientific">Bos taurus</name>
    <name type="common">Bovine</name>
    <dbReference type="NCBI Taxonomy" id="9913"/>
    <lineage>
        <taxon>Eukaryota</taxon>
        <taxon>Metazoa</taxon>
        <taxon>Chordata</taxon>
        <taxon>Craniata</taxon>
        <taxon>Vertebrata</taxon>
        <taxon>Euteleostomi</taxon>
        <taxon>Mammalia</taxon>
        <taxon>Eutheria</taxon>
        <taxon>Laurasiatheria</taxon>
        <taxon>Artiodactyla</taxon>
        <taxon>Ruminantia</taxon>
        <taxon>Pecora</taxon>
        <taxon>Bovidae</taxon>
        <taxon>Bovinae</taxon>
        <taxon>Bos</taxon>
    </lineage>
</organism>
<protein>
    <recommendedName>
        <fullName>Phytanoyl-CoA hydroxylase-interacting protein</fullName>
    </recommendedName>
    <alternativeName>
        <fullName>Phytanoyl-CoA hydroxylase-associated protein 1</fullName>
        <shortName>PAHX-AP1</shortName>
        <shortName>PAHXAP1</shortName>
    </alternativeName>
</protein>
<accession>Q0VD34</accession>
<keyword id="KW-0325">Glycoprotein</keyword>
<keyword id="KW-1185">Reference proteome</keyword>
<gene>
    <name type="primary">PHYHIP</name>
</gene>
<evidence type="ECO:0000250" key="1"/>
<evidence type="ECO:0000255" key="2"/>
<evidence type="ECO:0000255" key="3">
    <source>
        <dbReference type="PROSITE-ProRule" id="PRU00316"/>
    </source>
</evidence>
<evidence type="ECO:0000305" key="4"/>
<comment type="function">
    <text evidence="1">Its interaction with PHYH suggests a role in the development of the central system.</text>
</comment>
<comment type="subunit">
    <text evidence="1">Interacts with PHYH and ADGRB1.</text>
</comment>
<comment type="similarity">
    <text evidence="4">Belongs to the PHYHIP family.</text>
</comment>
<feature type="chain" id="PRO_0000285812" description="Phytanoyl-CoA hydroxylase-interacting protein">
    <location>
        <begin position="1"/>
        <end position="330"/>
    </location>
</feature>
<feature type="domain" description="Fibronectin type-III" evidence="3">
    <location>
        <begin position="6"/>
        <end position="115"/>
    </location>
</feature>
<feature type="glycosylation site" description="N-linked (GlcNAc...) asparagine" evidence="2">
    <location>
        <position position="14"/>
    </location>
</feature>
<feature type="glycosylation site" description="N-linked (GlcNAc...) asparagine" evidence="2">
    <location>
        <position position="325"/>
    </location>
</feature>
<sequence length="330" mass="37561">MELLSTPHSIEVSNITCDSFRISWTMENSDLERVTHYFIDLNKKENKNSNKFKHRDVPTKLVAKAVPLPMTVRGHWFLSPRTEYSVAVQTAVKQSDGEYLVSGWSETVEFCTGDYAKEHLAQLQEKAEQIAGRMLRFSVFYRNHHKEYFQHARTHCGNMLQPYLKDNSGSHGSPTSGMLHGVFFSCNTEFNTGQPPQDSPYGRWRFQIPAQRLFNPSTNLYFADFYCMYTAYHYAILVLAPKGSLGDRFCRDRLPLLDIACNKFLTCSVEDGELVFRHAQDLILEIIYTEPVDLSLGTLGEISGHQLMSLSTADAKKDPSCKTCNISVGR</sequence>
<dbReference type="EMBL" id="BC119858">
    <property type="protein sequence ID" value="AAI19859.1"/>
    <property type="molecule type" value="mRNA"/>
</dbReference>
<dbReference type="RefSeq" id="NP_001069883.1">
    <property type="nucleotide sequence ID" value="NM_001076415.1"/>
</dbReference>
<dbReference type="SMR" id="Q0VD34"/>
<dbReference type="FunCoup" id="Q0VD34">
    <property type="interactions" value="712"/>
</dbReference>
<dbReference type="STRING" id="9913.ENSBTAP00000020921"/>
<dbReference type="GlyCosmos" id="Q0VD34">
    <property type="glycosylation" value="2 sites, No reported glycans"/>
</dbReference>
<dbReference type="GlyGen" id="Q0VD34">
    <property type="glycosylation" value="2 sites"/>
</dbReference>
<dbReference type="PaxDb" id="9913-ENSBTAP00000020921"/>
<dbReference type="Ensembl" id="ENSBTAT00000020921.7">
    <property type="protein sequence ID" value="ENSBTAP00000020921.5"/>
    <property type="gene ID" value="ENSBTAG00000015757.7"/>
</dbReference>
<dbReference type="GeneID" id="616243"/>
<dbReference type="KEGG" id="bta:616243"/>
<dbReference type="CTD" id="9796"/>
<dbReference type="VEuPathDB" id="HostDB:ENSBTAG00000015757"/>
<dbReference type="VGNC" id="VGNC:32850">
    <property type="gene designation" value="PHYHIP"/>
</dbReference>
<dbReference type="eggNOG" id="ENOG502QQIT">
    <property type="taxonomic scope" value="Eukaryota"/>
</dbReference>
<dbReference type="GeneTree" id="ENSGT00390000014563"/>
<dbReference type="HOGENOM" id="CLU_054218_1_0_1"/>
<dbReference type="InParanoid" id="Q0VD34"/>
<dbReference type="OMA" id="SPGDHFC"/>
<dbReference type="OrthoDB" id="6101761at2759"/>
<dbReference type="TreeFam" id="TF314485"/>
<dbReference type="Proteomes" id="UP000009136">
    <property type="component" value="Chromosome 8"/>
</dbReference>
<dbReference type="Bgee" id="ENSBTAG00000015757">
    <property type="expression patterns" value="Expressed in cerebellum and 40 other cell types or tissues"/>
</dbReference>
<dbReference type="GO" id="GO:0005737">
    <property type="term" value="C:cytoplasm"/>
    <property type="evidence" value="ECO:0000250"/>
    <property type="project" value="UniProtKB"/>
</dbReference>
<dbReference type="GO" id="GO:1990782">
    <property type="term" value="F:protein tyrosine kinase binding"/>
    <property type="evidence" value="ECO:0007669"/>
    <property type="project" value="Ensembl"/>
</dbReference>
<dbReference type="GO" id="GO:0008104">
    <property type="term" value="P:protein localization"/>
    <property type="evidence" value="ECO:0000250"/>
    <property type="project" value="UniProtKB"/>
</dbReference>
<dbReference type="CDD" id="cd00063">
    <property type="entry name" value="FN3"/>
    <property type="match status" value="1"/>
</dbReference>
<dbReference type="FunFam" id="2.60.40.10:FF:000277">
    <property type="entry name" value="Phytanoyl-CoA hydroxylase-interacting protein-like protein"/>
    <property type="match status" value="1"/>
</dbReference>
<dbReference type="Gene3D" id="2.60.40.10">
    <property type="entry name" value="Immunoglobulins"/>
    <property type="match status" value="1"/>
</dbReference>
<dbReference type="InterPro" id="IPR003961">
    <property type="entry name" value="FN3_dom"/>
</dbReference>
<dbReference type="InterPro" id="IPR036116">
    <property type="entry name" value="FN3_sf"/>
</dbReference>
<dbReference type="InterPro" id="IPR013783">
    <property type="entry name" value="Ig-like_fold"/>
</dbReference>
<dbReference type="InterPro" id="IPR042868">
    <property type="entry name" value="PHYHIP/PHYHIPL"/>
</dbReference>
<dbReference type="InterPro" id="IPR045545">
    <property type="entry name" value="PHYIP/PHIPL_C"/>
</dbReference>
<dbReference type="PANTHER" id="PTHR15698:SF9">
    <property type="entry name" value="PHYTANOYL-COA HYDROXYLASE-INTERACTING PROTEIN"/>
    <property type="match status" value="1"/>
</dbReference>
<dbReference type="PANTHER" id="PTHR15698">
    <property type="entry name" value="PROTEIN CBG15099"/>
    <property type="match status" value="1"/>
</dbReference>
<dbReference type="Pfam" id="PF00041">
    <property type="entry name" value="fn3"/>
    <property type="match status" value="1"/>
</dbReference>
<dbReference type="Pfam" id="PF19281">
    <property type="entry name" value="PHYHIP_C"/>
    <property type="match status" value="1"/>
</dbReference>
<dbReference type="SUPFAM" id="SSF49265">
    <property type="entry name" value="Fibronectin type III"/>
    <property type="match status" value="1"/>
</dbReference>
<dbReference type="PROSITE" id="PS50853">
    <property type="entry name" value="FN3"/>
    <property type="match status" value="1"/>
</dbReference>
<reference key="1">
    <citation type="submission" date="2006-08" db="EMBL/GenBank/DDBJ databases">
        <authorList>
            <consortium name="NIH - Mammalian Gene Collection (MGC) project"/>
        </authorList>
    </citation>
    <scope>NUCLEOTIDE SEQUENCE [LARGE SCALE MRNA]</scope>
    <source>
        <strain>Hereford</strain>
        <tissue>Thalamus</tissue>
    </source>
</reference>
<name>PHYIP_BOVIN</name>